<gene>
    <name evidence="1" type="primary">rph</name>
    <name type="ordered locus">CC_0152</name>
</gene>
<sequence>MRPSERAPDQLRAVTLETGVNRYAEGSCLIGFGHTKVLVTATVEENVPGWMRNKGAGWVTAEYGMLPRATHTRGRREAAAGKQTGRTQEIQRLIGRSLRAVVDLKALGERQITLDCDVVQADGGTRTAAITGAWVALRLATKYLLDEGVLKTDPILGQVAAVSCGVFNGVPVLDLDYEEDSNAEADSNFVLTGVGDIVEIQATGEKRGFTRAEFESLYGLAEKGINELFALQRAAIGG</sequence>
<organism>
    <name type="scientific">Caulobacter vibrioides (strain ATCC 19089 / CIP 103742 / CB 15)</name>
    <name type="common">Caulobacter crescentus</name>
    <dbReference type="NCBI Taxonomy" id="190650"/>
    <lineage>
        <taxon>Bacteria</taxon>
        <taxon>Pseudomonadati</taxon>
        <taxon>Pseudomonadota</taxon>
        <taxon>Alphaproteobacteria</taxon>
        <taxon>Caulobacterales</taxon>
        <taxon>Caulobacteraceae</taxon>
        <taxon>Caulobacter</taxon>
    </lineage>
</organism>
<keyword id="KW-0548">Nucleotidyltransferase</keyword>
<keyword id="KW-1185">Reference proteome</keyword>
<keyword id="KW-0694">RNA-binding</keyword>
<keyword id="KW-0698">rRNA processing</keyword>
<keyword id="KW-0808">Transferase</keyword>
<keyword id="KW-0819">tRNA processing</keyword>
<keyword id="KW-0820">tRNA-binding</keyword>
<evidence type="ECO:0000255" key="1">
    <source>
        <dbReference type="HAMAP-Rule" id="MF_00564"/>
    </source>
</evidence>
<name>RNPH_CAUVC</name>
<feature type="chain" id="PRO_0000139880" description="Ribonuclease PH">
    <location>
        <begin position="1"/>
        <end position="238"/>
    </location>
</feature>
<feature type="binding site" evidence="1">
    <location>
        <position position="86"/>
    </location>
    <ligand>
        <name>phosphate</name>
        <dbReference type="ChEBI" id="CHEBI:43474"/>
        <note>substrate</note>
    </ligand>
</feature>
<feature type="binding site" evidence="1">
    <location>
        <begin position="124"/>
        <end position="126"/>
    </location>
    <ligand>
        <name>phosphate</name>
        <dbReference type="ChEBI" id="CHEBI:43474"/>
        <note>substrate</note>
    </ligand>
</feature>
<accession>P0CAW5</accession>
<accession>P48196</accession>
<dbReference type="EC" id="2.7.7.56" evidence="1"/>
<dbReference type="EMBL" id="AE005673">
    <property type="protein sequence ID" value="AAK22139.1"/>
    <property type="molecule type" value="Genomic_DNA"/>
</dbReference>
<dbReference type="PIR" id="G87267">
    <property type="entry name" value="G87267"/>
</dbReference>
<dbReference type="RefSeq" id="NP_418971.1">
    <property type="nucleotide sequence ID" value="NC_002696.2"/>
</dbReference>
<dbReference type="RefSeq" id="WP_010918041.1">
    <property type="nucleotide sequence ID" value="NC_002696.2"/>
</dbReference>
<dbReference type="SMR" id="P0CAW5"/>
<dbReference type="STRING" id="190650.CC_0152"/>
<dbReference type="EnsemblBacteria" id="AAK22139">
    <property type="protein sequence ID" value="AAK22139"/>
    <property type="gene ID" value="CC_0152"/>
</dbReference>
<dbReference type="KEGG" id="ccr:CC_0152"/>
<dbReference type="PATRIC" id="fig|190650.5.peg.149"/>
<dbReference type="eggNOG" id="COG0689">
    <property type="taxonomic scope" value="Bacteria"/>
</dbReference>
<dbReference type="HOGENOM" id="CLU_050858_0_0_5"/>
<dbReference type="BioCyc" id="CAULO:CC0152-MONOMER"/>
<dbReference type="Proteomes" id="UP000001816">
    <property type="component" value="Chromosome"/>
</dbReference>
<dbReference type="GO" id="GO:0000175">
    <property type="term" value="F:3'-5'-RNA exonuclease activity"/>
    <property type="evidence" value="ECO:0007669"/>
    <property type="project" value="UniProtKB-UniRule"/>
</dbReference>
<dbReference type="GO" id="GO:0000049">
    <property type="term" value="F:tRNA binding"/>
    <property type="evidence" value="ECO:0007669"/>
    <property type="project" value="UniProtKB-UniRule"/>
</dbReference>
<dbReference type="GO" id="GO:0009022">
    <property type="term" value="F:tRNA nucleotidyltransferase activity"/>
    <property type="evidence" value="ECO:0007669"/>
    <property type="project" value="UniProtKB-UniRule"/>
</dbReference>
<dbReference type="GO" id="GO:0016075">
    <property type="term" value="P:rRNA catabolic process"/>
    <property type="evidence" value="ECO:0007669"/>
    <property type="project" value="UniProtKB-UniRule"/>
</dbReference>
<dbReference type="GO" id="GO:0006364">
    <property type="term" value="P:rRNA processing"/>
    <property type="evidence" value="ECO:0007669"/>
    <property type="project" value="UniProtKB-KW"/>
</dbReference>
<dbReference type="GO" id="GO:0008033">
    <property type="term" value="P:tRNA processing"/>
    <property type="evidence" value="ECO:0007669"/>
    <property type="project" value="UniProtKB-UniRule"/>
</dbReference>
<dbReference type="CDD" id="cd11362">
    <property type="entry name" value="RNase_PH_bact"/>
    <property type="match status" value="1"/>
</dbReference>
<dbReference type="FunFam" id="3.30.230.70:FF:000003">
    <property type="entry name" value="Ribonuclease PH"/>
    <property type="match status" value="1"/>
</dbReference>
<dbReference type="Gene3D" id="3.30.230.70">
    <property type="entry name" value="GHMP Kinase, N-terminal domain"/>
    <property type="match status" value="1"/>
</dbReference>
<dbReference type="HAMAP" id="MF_00564">
    <property type="entry name" value="RNase_PH"/>
    <property type="match status" value="1"/>
</dbReference>
<dbReference type="InterPro" id="IPR001247">
    <property type="entry name" value="ExoRNase_PH_dom1"/>
</dbReference>
<dbReference type="InterPro" id="IPR015847">
    <property type="entry name" value="ExoRNase_PH_dom2"/>
</dbReference>
<dbReference type="InterPro" id="IPR036345">
    <property type="entry name" value="ExoRNase_PH_dom2_sf"/>
</dbReference>
<dbReference type="InterPro" id="IPR027408">
    <property type="entry name" value="PNPase/RNase_PH_dom_sf"/>
</dbReference>
<dbReference type="InterPro" id="IPR020568">
    <property type="entry name" value="Ribosomal_Su5_D2-typ_SF"/>
</dbReference>
<dbReference type="InterPro" id="IPR050080">
    <property type="entry name" value="RNase_PH"/>
</dbReference>
<dbReference type="InterPro" id="IPR002381">
    <property type="entry name" value="RNase_PH_bac-type"/>
</dbReference>
<dbReference type="InterPro" id="IPR018336">
    <property type="entry name" value="RNase_PH_CS"/>
</dbReference>
<dbReference type="NCBIfam" id="TIGR01966">
    <property type="entry name" value="RNasePH"/>
    <property type="match status" value="1"/>
</dbReference>
<dbReference type="PANTHER" id="PTHR11953">
    <property type="entry name" value="EXOSOME COMPLEX COMPONENT"/>
    <property type="match status" value="1"/>
</dbReference>
<dbReference type="PANTHER" id="PTHR11953:SF0">
    <property type="entry name" value="EXOSOME COMPLEX COMPONENT RRP41"/>
    <property type="match status" value="1"/>
</dbReference>
<dbReference type="Pfam" id="PF01138">
    <property type="entry name" value="RNase_PH"/>
    <property type="match status" value="1"/>
</dbReference>
<dbReference type="Pfam" id="PF03725">
    <property type="entry name" value="RNase_PH_C"/>
    <property type="match status" value="1"/>
</dbReference>
<dbReference type="SUPFAM" id="SSF55666">
    <property type="entry name" value="Ribonuclease PH domain 2-like"/>
    <property type="match status" value="1"/>
</dbReference>
<dbReference type="SUPFAM" id="SSF54211">
    <property type="entry name" value="Ribosomal protein S5 domain 2-like"/>
    <property type="match status" value="1"/>
</dbReference>
<dbReference type="PROSITE" id="PS01277">
    <property type="entry name" value="RIBONUCLEASE_PH"/>
    <property type="match status" value="1"/>
</dbReference>
<proteinExistence type="inferred from homology"/>
<protein>
    <recommendedName>
        <fullName evidence="1">Ribonuclease PH</fullName>
        <shortName evidence="1">RNase PH</shortName>
        <ecNumber evidence="1">2.7.7.56</ecNumber>
    </recommendedName>
    <alternativeName>
        <fullName evidence="1">tRNA nucleotidyltransferase</fullName>
    </alternativeName>
</protein>
<reference key="1">
    <citation type="journal article" date="2001" name="Proc. Natl. Acad. Sci. U.S.A.">
        <title>Complete genome sequence of Caulobacter crescentus.</title>
        <authorList>
            <person name="Nierman W.C."/>
            <person name="Feldblyum T.V."/>
            <person name="Laub M.T."/>
            <person name="Paulsen I.T."/>
            <person name="Nelson K.E."/>
            <person name="Eisen J.A."/>
            <person name="Heidelberg J.F."/>
            <person name="Alley M.R.K."/>
            <person name="Ohta N."/>
            <person name="Maddock J.R."/>
            <person name="Potocka I."/>
            <person name="Nelson W.C."/>
            <person name="Newton A."/>
            <person name="Stephens C."/>
            <person name="Phadke N.D."/>
            <person name="Ely B."/>
            <person name="DeBoy R.T."/>
            <person name="Dodson R.J."/>
            <person name="Durkin A.S."/>
            <person name="Gwinn M.L."/>
            <person name="Haft D.H."/>
            <person name="Kolonay J.F."/>
            <person name="Smit J."/>
            <person name="Craven M.B."/>
            <person name="Khouri H.M."/>
            <person name="Shetty J."/>
            <person name="Berry K.J."/>
            <person name="Utterback T.R."/>
            <person name="Tran K."/>
            <person name="Wolf A.M."/>
            <person name="Vamathevan J.J."/>
            <person name="Ermolaeva M.D."/>
            <person name="White O."/>
            <person name="Salzberg S.L."/>
            <person name="Venter J.C."/>
            <person name="Shapiro L."/>
            <person name="Fraser C.M."/>
        </authorList>
    </citation>
    <scope>NUCLEOTIDE SEQUENCE [LARGE SCALE GENOMIC DNA]</scope>
    <source>
        <strain>ATCC 19089 / CIP 103742 / CB 15</strain>
    </source>
</reference>
<comment type="function">
    <text evidence="1">Phosphorolytic 3'-5' exoribonuclease that plays an important role in tRNA 3'-end maturation. Removes nucleotide residues following the 3'-CCA terminus of tRNAs; can also add nucleotides to the ends of RNA molecules by using nucleoside diphosphates as substrates, but this may not be physiologically important. Probably plays a role in initiation of 16S rRNA degradation (leading to ribosome degradation) during starvation.</text>
</comment>
<comment type="catalytic activity">
    <reaction evidence="1">
        <text>tRNA(n+1) + phosphate = tRNA(n) + a ribonucleoside 5'-diphosphate</text>
        <dbReference type="Rhea" id="RHEA:10628"/>
        <dbReference type="Rhea" id="RHEA-COMP:17343"/>
        <dbReference type="Rhea" id="RHEA-COMP:17344"/>
        <dbReference type="ChEBI" id="CHEBI:43474"/>
        <dbReference type="ChEBI" id="CHEBI:57930"/>
        <dbReference type="ChEBI" id="CHEBI:173114"/>
        <dbReference type="EC" id="2.7.7.56"/>
    </reaction>
</comment>
<comment type="subunit">
    <text evidence="1">Homohexameric ring arranged as a trimer of dimers.</text>
</comment>
<comment type="similarity">
    <text evidence="1">Belongs to the RNase PH family.</text>
</comment>